<dbReference type="EMBL" id="CT971583">
    <property type="protein sequence ID" value="CAK22736.1"/>
    <property type="molecule type" value="Genomic_DNA"/>
</dbReference>
<dbReference type="SMR" id="A5GIH1"/>
<dbReference type="STRING" id="32051.SynWH7803_0310"/>
<dbReference type="KEGG" id="syx:SynWH7803_0310"/>
<dbReference type="eggNOG" id="ENOG5033CII">
    <property type="taxonomic scope" value="Bacteria"/>
</dbReference>
<dbReference type="HOGENOM" id="CLU_212150_0_0_3"/>
<dbReference type="Proteomes" id="UP000001566">
    <property type="component" value="Chromosome"/>
</dbReference>
<dbReference type="GO" id="GO:0009539">
    <property type="term" value="C:photosystem II reaction center"/>
    <property type="evidence" value="ECO:0007669"/>
    <property type="project" value="InterPro"/>
</dbReference>
<dbReference type="GO" id="GO:0031676">
    <property type="term" value="C:plasma membrane-derived thylakoid membrane"/>
    <property type="evidence" value="ECO:0007669"/>
    <property type="project" value="UniProtKB-SubCell"/>
</dbReference>
<dbReference type="GO" id="GO:0015979">
    <property type="term" value="P:photosynthesis"/>
    <property type="evidence" value="ECO:0007669"/>
    <property type="project" value="UniProtKB-UniRule"/>
</dbReference>
<dbReference type="HAMAP" id="MF_01316">
    <property type="entry name" value="PSII_PsbI"/>
    <property type="match status" value="1"/>
</dbReference>
<dbReference type="InterPro" id="IPR003686">
    <property type="entry name" value="PSII_PsbI"/>
</dbReference>
<dbReference type="InterPro" id="IPR037271">
    <property type="entry name" value="PSII_PsbI_sf"/>
</dbReference>
<dbReference type="NCBIfam" id="NF002735">
    <property type="entry name" value="PRK02655.1"/>
    <property type="match status" value="1"/>
</dbReference>
<dbReference type="PANTHER" id="PTHR35772">
    <property type="entry name" value="PHOTOSYSTEM II REACTION CENTER PROTEIN I"/>
    <property type="match status" value="1"/>
</dbReference>
<dbReference type="PANTHER" id="PTHR35772:SF1">
    <property type="entry name" value="PHOTOSYSTEM II REACTION CENTER PROTEIN I"/>
    <property type="match status" value="1"/>
</dbReference>
<dbReference type="Pfam" id="PF02532">
    <property type="entry name" value="PsbI"/>
    <property type="match status" value="1"/>
</dbReference>
<dbReference type="SUPFAM" id="SSF161041">
    <property type="entry name" value="Photosystem II reaction center protein I, PsbI"/>
    <property type="match status" value="1"/>
</dbReference>
<sequence length="39" mass="4414">MLALKISVYSVVFFFLGIFVFGFLASDPSRTPSRKDLED</sequence>
<keyword id="KW-0472">Membrane</keyword>
<keyword id="KW-0602">Photosynthesis</keyword>
<keyword id="KW-0604">Photosystem II</keyword>
<keyword id="KW-0674">Reaction center</keyword>
<keyword id="KW-1185">Reference proteome</keyword>
<keyword id="KW-0793">Thylakoid</keyword>
<keyword id="KW-0812">Transmembrane</keyword>
<keyword id="KW-1133">Transmembrane helix</keyword>
<protein>
    <recommendedName>
        <fullName evidence="1">Photosystem II reaction center protein I</fullName>
        <shortName evidence="1">PSII-I</shortName>
    </recommendedName>
    <alternativeName>
        <fullName evidence="1">PSII 4.4 kDa protein</fullName>
    </alternativeName>
</protein>
<reference key="1">
    <citation type="submission" date="2006-05" db="EMBL/GenBank/DDBJ databases">
        <authorList>
            <consortium name="Genoscope"/>
        </authorList>
    </citation>
    <scope>NUCLEOTIDE SEQUENCE [LARGE SCALE GENOMIC DNA]</scope>
    <source>
        <strain>WH7803</strain>
    </source>
</reference>
<gene>
    <name evidence="1" type="primary">psbI</name>
    <name type="ordered locus">SynWH7803_0310</name>
</gene>
<feature type="chain" id="PRO_0000298308" description="Photosystem II reaction center protein I">
    <location>
        <begin position="1"/>
        <end position="39"/>
    </location>
</feature>
<feature type="transmembrane region" description="Helical" evidence="1">
    <location>
        <begin position="6"/>
        <end position="26"/>
    </location>
</feature>
<evidence type="ECO:0000255" key="1">
    <source>
        <dbReference type="HAMAP-Rule" id="MF_01316"/>
    </source>
</evidence>
<organism>
    <name type="scientific">Synechococcus sp. (strain WH7803)</name>
    <dbReference type="NCBI Taxonomy" id="32051"/>
    <lineage>
        <taxon>Bacteria</taxon>
        <taxon>Bacillati</taxon>
        <taxon>Cyanobacteriota</taxon>
        <taxon>Cyanophyceae</taxon>
        <taxon>Synechococcales</taxon>
        <taxon>Synechococcaceae</taxon>
        <taxon>Synechococcus</taxon>
    </lineage>
</organism>
<comment type="function">
    <text evidence="1">One of the components of the core complex of photosystem II (PSII), required for its stability and/or assembly. PSII is a light-driven water:plastoquinone oxidoreductase that uses light energy to abstract electrons from H(2)O, generating O(2) and a proton gradient subsequently used for ATP formation. It consists of a core antenna complex that captures photons, and an electron transfer chain that converts photonic excitation into a charge separation.</text>
</comment>
<comment type="subunit">
    <text evidence="1">PSII is composed of 1 copy each of membrane proteins PsbA, PsbB, PsbC, PsbD, PsbE, PsbF, PsbH, PsbI, PsbJ, PsbK, PsbL, PsbM, PsbT, PsbX, PsbY, PsbZ, Psb30/Ycf12, peripheral proteins PsbO, CyanoQ (PsbQ), PsbU, PsbV and a large number of cofactors. It forms dimeric complexes.</text>
</comment>
<comment type="subcellular location">
    <subcellularLocation>
        <location evidence="1">Cellular thylakoid membrane</location>
        <topology evidence="1">Single-pass membrane protein</topology>
    </subcellularLocation>
</comment>
<comment type="similarity">
    <text evidence="1">Belongs to the PsbI family.</text>
</comment>
<name>PSBI_SYNPW</name>
<proteinExistence type="inferred from homology"/>
<accession>A5GIH1</accession>